<organism>
    <name type="scientific">Leuconostoc mesenteroides subsp. mesenteroides (strain ATCC 8293 / DSM 20343 / BCRC 11652 / CCM 1803 / JCM 6124 / NCDO 523 / NBRC 100496 / NCIMB 8023 / NCTC 12954 / NRRL B-1118 / 37Y)</name>
    <dbReference type="NCBI Taxonomy" id="203120"/>
    <lineage>
        <taxon>Bacteria</taxon>
        <taxon>Bacillati</taxon>
        <taxon>Bacillota</taxon>
        <taxon>Bacilli</taxon>
        <taxon>Lactobacillales</taxon>
        <taxon>Lactobacillaceae</taxon>
        <taxon>Leuconostoc</taxon>
    </lineage>
</organism>
<keyword id="KW-0274">FAD</keyword>
<keyword id="KW-0285">Flavoprotein</keyword>
<keyword id="KW-0521">NADP</keyword>
<keyword id="KW-0560">Oxidoreductase</keyword>
<keyword id="KW-1185">Reference proteome</keyword>
<dbReference type="EC" id="1.18.1.2" evidence="1"/>
<dbReference type="EMBL" id="CP000414">
    <property type="protein sequence ID" value="ABJ61423.1"/>
    <property type="molecule type" value="Genomic_DNA"/>
</dbReference>
<dbReference type="RefSeq" id="WP_011679181.1">
    <property type="nucleotide sequence ID" value="NC_008531.1"/>
</dbReference>
<dbReference type="SMR" id="Q03ZE9"/>
<dbReference type="EnsemblBacteria" id="ABJ61423">
    <property type="protein sequence ID" value="ABJ61423"/>
    <property type="gene ID" value="LEUM_0297"/>
</dbReference>
<dbReference type="GeneID" id="29576745"/>
<dbReference type="KEGG" id="lme:LEUM_0297"/>
<dbReference type="eggNOG" id="COG0492">
    <property type="taxonomic scope" value="Bacteria"/>
</dbReference>
<dbReference type="HOGENOM" id="CLU_031864_5_5_9"/>
<dbReference type="Proteomes" id="UP000000362">
    <property type="component" value="Chromosome"/>
</dbReference>
<dbReference type="GO" id="GO:0004324">
    <property type="term" value="F:ferredoxin-NADP+ reductase activity"/>
    <property type="evidence" value="ECO:0007669"/>
    <property type="project" value="UniProtKB-UniRule"/>
</dbReference>
<dbReference type="GO" id="GO:0050660">
    <property type="term" value="F:flavin adenine dinucleotide binding"/>
    <property type="evidence" value="ECO:0007669"/>
    <property type="project" value="UniProtKB-UniRule"/>
</dbReference>
<dbReference type="GO" id="GO:0050661">
    <property type="term" value="F:NADP binding"/>
    <property type="evidence" value="ECO:0007669"/>
    <property type="project" value="UniProtKB-UniRule"/>
</dbReference>
<dbReference type="Gene3D" id="3.50.50.60">
    <property type="entry name" value="FAD/NAD(P)-binding domain"/>
    <property type="match status" value="2"/>
</dbReference>
<dbReference type="HAMAP" id="MF_01685">
    <property type="entry name" value="FENR2"/>
    <property type="match status" value="1"/>
</dbReference>
<dbReference type="InterPro" id="IPR036188">
    <property type="entry name" value="FAD/NAD-bd_sf"/>
</dbReference>
<dbReference type="InterPro" id="IPR023753">
    <property type="entry name" value="FAD/NAD-binding_dom"/>
</dbReference>
<dbReference type="InterPro" id="IPR022890">
    <property type="entry name" value="Fd--NADP_Rdtase_type_2"/>
</dbReference>
<dbReference type="InterPro" id="IPR050097">
    <property type="entry name" value="Ferredoxin-NADP_redctase_2"/>
</dbReference>
<dbReference type="PANTHER" id="PTHR48105">
    <property type="entry name" value="THIOREDOXIN REDUCTASE 1-RELATED-RELATED"/>
    <property type="match status" value="1"/>
</dbReference>
<dbReference type="Pfam" id="PF07992">
    <property type="entry name" value="Pyr_redox_2"/>
    <property type="match status" value="1"/>
</dbReference>
<dbReference type="PRINTS" id="PR00368">
    <property type="entry name" value="FADPNR"/>
</dbReference>
<dbReference type="PRINTS" id="PR00469">
    <property type="entry name" value="PNDRDTASEII"/>
</dbReference>
<dbReference type="SUPFAM" id="SSF51905">
    <property type="entry name" value="FAD/NAD(P)-binding domain"/>
    <property type="match status" value="1"/>
</dbReference>
<comment type="catalytic activity">
    <reaction evidence="1">
        <text>2 reduced [2Fe-2S]-[ferredoxin] + NADP(+) + H(+) = 2 oxidized [2Fe-2S]-[ferredoxin] + NADPH</text>
        <dbReference type="Rhea" id="RHEA:20125"/>
        <dbReference type="Rhea" id="RHEA-COMP:10000"/>
        <dbReference type="Rhea" id="RHEA-COMP:10001"/>
        <dbReference type="ChEBI" id="CHEBI:15378"/>
        <dbReference type="ChEBI" id="CHEBI:33737"/>
        <dbReference type="ChEBI" id="CHEBI:33738"/>
        <dbReference type="ChEBI" id="CHEBI:57783"/>
        <dbReference type="ChEBI" id="CHEBI:58349"/>
        <dbReference type="EC" id="1.18.1.2"/>
    </reaction>
</comment>
<comment type="cofactor">
    <cofactor evidence="1">
        <name>FAD</name>
        <dbReference type="ChEBI" id="CHEBI:57692"/>
    </cofactor>
    <text evidence="1">Binds 1 FAD per subunit.</text>
</comment>
<comment type="subunit">
    <text evidence="1">Homodimer.</text>
</comment>
<comment type="similarity">
    <text evidence="1">Belongs to the ferredoxin--NADP reductase type 2 family.</text>
</comment>
<feature type="chain" id="PRO_0000364868" description="Ferredoxin--NADP reductase">
    <location>
        <begin position="1"/>
        <end position="336"/>
    </location>
</feature>
<feature type="binding site" evidence="1">
    <location>
        <position position="34"/>
    </location>
    <ligand>
        <name>FAD</name>
        <dbReference type="ChEBI" id="CHEBI:57692"/>
    </ligand>
</feature>
<feature type="binding site" evidence="1">
    <location>
        <position position="42"/>
    </location>
    <ligand>
        <name>FAD</name>
        <dbReference type="ChEBI" id="CHEBI:57692"/>
    </ligand>
</feature>
<feature type="binding site" evidence="1">
    <location>
        <position position="47"/>
    </location>
    <ligand>
        <name>FAD</name>
        <dbReference type="ChEBI" id="CHEBI:57692"/>
    </ligand>
</feature>
<feature type="binding site" evidence="1">
    <location>
        <position position="87"/>
    </location>
    <ligand>
        <name>FAD</name>
        <dbReference type="ChEBI" id="CHEBI:57692"/>
    </ligand>
</feature>
<feature type="binding site" evidence="1">
    <location>
        <position position="121"/>
    </location>
    <ligand>
        <name>FAD</name>
        <dbReference type="ChEBI" id="CHEBI:57692"/>
    </ligand>
</feature>
<feature type="binding site" evidence="1">
    <location>
        <position position="286"/>
    </location>
    <ligand>
        <name>FAD</name>
        <dbReference type="ChEBI" id="CHEBI:57692"/>
    </ligand>
</feature>
<feature type="binding site" evidence="1">
    <location>
        <position position="326"/>
    </location>
    <ligand>
        <name>FAD</name>
        <dbReference type="ChEBI" id="CHEBI:57692"/>
    </ligand>
</feature>
<proteinExistence type="inferred from homology"/>
<reference key="1">
    <citation type="journal article" date="2006" name="Proc. Natl. Acad. Sci. U.S.A.">
        <title>Comparative genomics of the lactic acid bacteria.</title>
        <authorList>
            <person name="Makarova K.S."/>
            <person name="Slesarev A."/>
            <person name="Wolf Y.I."/>
            <person name="Sorokin A."/>
            <person name="Mirkin B."/>
            <person name="Koonin E.V."/>
            <person name="Pavlov A."/>
            <person name="Pavlova N."/>
            <person name="Karamychev V."/>
            <person name="Polouchine N."/>
            <person name="Shakhova V."/>
            <person name="Grigoriev I."/>
            <person name="Lou Y."/>
            <person name="Rohksar D."/>
            <person name="Lucas S."/>
            <person name="Huang K."/>
            <person name="Goodstein D.M."/>
            <person name="Hawkins T."/>
            <person name="Plengvidhya V."/>
            <person name="Welker D."/>
            <person name="Hughes J."/>
            <person name="Goh Y."/>
            <person name="Benson A."/>
            <person name="Baldwin K."/>
            <person name="Lee J.-H."/>
            <person name="Diaz-Muniz I."/>
            <person name="Dosti B."/>
            <person name="Smeianov V."/>
            <person name="Wechter W."/>
            <person name="Barabote R."/>
            <person name="Lorca G."/>
            <person name="Altermann E."/>
            <person name="Barrangou R."/>
            <person name="Ganesan B."/>
            <person name="Xie Y."/>
            <person name="Rawsthorne H."/>
            <person name="Tamir D."/>
            <person name="Parker C."/>
            <person name="Breidt F."/>
            <person name="Broadbent J.R."/>
            <person name="Hutkins R."/>
            <person name="O'Sullivan D."/>
            <person name="Steele J."/>
            <person name="Unlu G."/>
            <person name="Saier M.H. Jr."/>
            <person name="Klaenhammer T."/>
            <person name="Richardson P."/>
            <person name="Kozyavkin S."/>
            <person name="Weimer B.C."/>
            <person name="Mills D.A."/>
        </authorList>
    </citation>
    <scope>NUCLEOTIDE SEQUENCE [LARGE SCALE GENOMIC DNA]</scope>
    <source>
        <strain>ATCC 8293 / DSM 20343 / BCRC 11652 / CCM 1803 / JCM 6124 / NCDO 523 / NBRC 100496 / NCIMB 8023 / NCTC 12954 / NRRL B-1118 / 37Y</strain>
    </source>
</reference>
<sequence length="336" mass="36436">MTELYDVAIIGGGPVGMFTAFYAGLRDTKAVLVESLATLGGQVTSLYPEKKILDVAGFTGIKGSALIDSLDEQMKLFPIDIKTSTTVTNVTKTNDLFTVTINNGSSFQAKTIIITTGKGSFEPRKMQVSGVDQLVGQGIHYFVTNKHDFDNHDVAIAGGGDSAIDMATMLNEFTHSTRIIHRRDQFRAMEQSVKQLSQSSVIKETPKKVSQIEKQSDGKLKITLAQVKNDQVTNDICVDDLIINYGFISENKIVHGWDIQPENEGQAFSVDQAMQTTIPGVFAIGDASHYEGKADLIAVGFGEAPTAVNAAIRFFDPQRRGPGHSSSMVIQDGKLI</sequence>
<protein>
    <recommendedName>
        <fullName evidence="1">Ferredoxin--NADP reductase</fullName>
        <shortName evidence="1">FNR</shortName>
        <shortName evidence="1">Fd-NADP(+) reductase</shortName>
        <ecNumber evidence="1">1.18.1.2</ecNumber>
    </recommendedName>
</protein>
<gene>
    <name type="ordered locus">LEUM_0297</name>
</gene>
<accession>Q03ZE9</accession>
<name>FENR_LEUMM</name>
<evidence type="ECO:0000255" key="1">
    <source>
        <dbReference type="HAMAP-Rule" id="MF_01685"/>
    </source>
</evidence>